<organism>
    <name type="scientific">Homo sapiens</name>
    <name type="common">Human</name>
    <dbReference type="NCBI Taxonomy" id="9606"/>
    <lineage>
        <taxon>Eukaryota</taxon>
        <taxon>Metazoa</taxon>
        <taxon>Chordata</taxon>
        <taxon>Craniata</taxon>
        <taxon>Vertebrata</taxon>
        <taxon>Euteleostomi</taxon>
        <taxon>Mammalia</taxon>
        <taxon>Eutheria</taxon>
        <taxon>Euarchontoglires</taxon>
        <taxon>Primates</taxon>
        <taxon>Haplorrhini</taxon>
        <taxon>Catarrhini</taxon>
        <taxon>Hominidae</taxon>
        <taxon>Homo</taxon>
    </lineage>
</organism>
<proteinExistence type="evidence at protein level"/>
<protein>
    <recommendedName>
        <fullName>Double homeobox protein 4C</fullName>
    </recommendedName>
    <alternativeName>
        <fullName>Double homeobox protein 4, centromeric</fullName>
        <shortName>DUX4c</shortName>
    </alternativeName>
    <alternativeName>
        <fullName>Double homeobox protein 4-like protein 9</fullName>
    </alternativeName>
</protein>
<gene>
    <name type="primary">DUX4L9</name>
    <name type="synonym">DUX4C</name>
</gene>
<sequence length="374" mass="39442">MALPTPSDSTLPAEARGRGRRRRLVWTPSQSEALRACFERNPYPGIATRERLAQAIGIPEPRVQIWFQNERSRQLRQHRRESRPWPGRRGPPEGRRKRTAVTGSQTALLLRAFEKDRFPGIAAREELARETGLPESRIQIWFQNRRARHPGQGGRAPAQAGGLCSAAPGGGHPAPSWVAFAHTGAWGTGLPAPHVPCAPGALPQGAFVSQAARAAPALQPSQAAPAEGISQPAPARGDFAYAAPAPPDGALSHPQAPRWPPHPGKSREDRDPQRDGLPGPCAVAQPGPAQAGPQGQGVLAPPTSQGSPWWGWGRGPQVAGAAWEPQAGAAPPPQPAPPDASAASTDASHPGASQPLQEPGRSSTVTSSLLYELL</sequence>
<dbReference type="EMBL" id="AY500824">
    <property type="protein sequence ID" value="AAS15569.1"/>
    <property type="molecule type" value="Genomic_DNA"/>
</dbReference>
<dbReference type="EMBL" id="AF146191">
    <property type="status" value="NOT_ANNOTATED_CDS"/>
    <property type="molecule type" value="Genomic_DNA"/>
</dbReference>
<dbReference type="SMR" id="Q6RFH8"/>
<dbReference type="FunCoup" id="Q6RFH8">
    <property type="interactions" value="39"/>
</dbReference>
<dbReference type="IntAct" id="Q6RFH8">
    <property type="interactions" value="51"/>
</dbReference>
<dbReference type="GlyGen" id="Q6RFH8">
    <property type="glycosylation" value="1 site"/>
</dbReference>
<dbReference type="iPTMnet" id="Q6RFH8"/>
<dbReference type="PhosphoSitePlus" id="Q6RFH8"/>
<dbReference type="BioMuta" id="HGNC:33855"/>
<dbReference type="DMDM" id="74710112"/>
<dbReference type="MassIVE" id="Q6RFH8"/>
<dbReference type="AGR" id="HGNC:33855"/>
<dbReference type="GeneCards" id="DUX4L9"/>
<dbReference type="HGNC" id="HGNC:33855">
    <property type="gene designation" value="DUX4L9"/>
</dbReference>
<dbReference type="MIM" id="615581">
    <property type="type" value="gene"/>
</dbReference>
<dbReference type="neXtProt" id="NX_Q6RFH8"/>
<dbReference type="InParanoid" id="Q6RFH8"/>
<dbReference type="PAN-GO" id="Q6RFH8">
    <property type="GO annotations" value="4 GO annotations based on evolutionary models"/>
</dbReference>
<dbReference type="PhylomeDB" id="Q6RFH8"/>
<dbReference type="PathwayCommons" id="Q6RFH8"/>
<dbReference type="SignaLink" id="Q6RFH8"/>
<dbReference type="Pharos" id="Q6RFH8">
    <property type="development level" value="Tdark"/>
</dbReference>
<dbReference type="PRO" id="PR:Q6RFH8"/>
<dbReference type="Proteomes" id="UP000005640">
    <property type="component" value="Unplaced"/>
</dbReference>
<dbReference type="RNAct" id="Q6RFH8">
    <property type="molecule type" value="protein"/>
</dbReference>
<dbReference type="GO" id="GO:0005737">
    <property type="term" value="C:cytoplasm"/>
    <property type="evidence" value="ECO:0000314"/>
    <property type="project" value="UniProtKB"/>
</dbReference>
<dbReference type="GO" id="GO:0005634">
    <property type="term" value="C:nucleus"/>
    <property type="evidence" value="ECO:0000314"/>
    <property type="project" value="UniProtKB"/>
</dbReference>
<dbReference type="GO" id="GO:0000981">
    <property type="term" value="F:DNA-binding transcription factor activity, RNA polymerase II-specific"/>
    <property type="evidence" value="ECO:0000318"/>
    <property type="project" value="GO_Central"/>
</dbReference>
<dbReference type="GO" id="GO:0000977">
    <property type="term" value="F:RNA polymerase II transcription regulatory region sequence-specific DNA binding"/>
    <property type="evidence" value="ECO:0000318"/>
    <property type="project" value="GO_Central"/>
</dbReference>
<dbReference type="GO" id="GO:0000976">
    <property type="term" value="F:transcription cis-regulatory region binding"/>
    <property type="evidence" value="ECO:0000314"/>
    <property type="project" value="UniProtKB"/>
</dbReference>
<dbReference type="GO" id="GO:0008283">
    <property type="term" value="P:cell population proliferation"/>
    <property type="evidence" value="ECO:0000314"/>
    <property type="project" value="UniProtKB"/>
</dbReference>
<dbReference type="GO" id="GO:0045944">
    <property type="term" value="P:positive regulation of transcription by RNA polymerase II"/>
    <property type="evidence" value="ECO:0000314"/>
    <property type="project" value="UniProtKB"/>
</dbReference>
<dbReference type="GO" id="GO:0010468">
    <property type="term" value="P:regulation of gene expression"/>
    <property type="evidence" value="ECO:0000314"/>
    <property type="project" value="UniProtKB"/>
</dbReference>
<dbReference type="GO" id="GO:0006357">
    <property type="term" value="P:regulation of transcription by RNA polymerase II"/>
    <property type="evidence" value="ECO:0000318"/>
    <property type="project" value="GO_Central"/>
</dbReference>
<dbReference type="CDD" id="cd00086">
    <property type="entry name" value="homeodomain"/>
    <property type="match status" value="2"/>
</dbReference>
<dbReference type="FunFam" id="1.10.10.60:FF:000325">
    <property type="entry name" value="Double homeobox protein 4"/>
    <property type="match status" value="1"/>
</dbReference>
<dbReference type="FunFam" id="1.10.10.60:FF:000354">
    <property type="entry name" value="Double homeobox protein 4"/>
    <property type="match status" value="1"/>
</dbReference>
<dbReference type="Gene3D" id="1.10.10.60">
    <property type="entry name" value="Homeodomain-like"/>
    <property type="match status" value="2"/>
</dbReference>
<dbReference type="InterPro" id="IPR001356">
    <property type="entry name" value="HD"/>
</dbReference>
<dbReference type="InterPro" id="IPR051306">
    <property type="entry name" value="Homeobox_regulator"/>
</dbReference>
<dbReference type="InterPro" id="IPR009057">
    <property type="entry name" value="Homeodomain-like_sf"/>
</dbReference>
<dbReference type="InterPro" id="IPR000047">
    <property type="entry name" value="HTH_motif"/>
</dbReference>
<dbReference type="PANTHER" id="PTHR46123:SF3">
    <property type="entry name" value="DOUBLE HOMEOBOX PROTEIN 1-RELATED"/>
    <property type="match status" value="1"/>
</dbReference>
<dbReference type="PANTHER" id="PTHR46123">
    <property type="entry name" value="MIX-TYPE HOMEOBOX GENE 1-RELATED"/>
    <property type="match status" value="1"/>
</dbReference>
<dbReference type="Pfam" id="PF00046">
    <property type="entry name" value="Homeodomain"/>
    <property type="match status" value="2"/>
</dbReference>
<dbReference type="PRINTS" id="PR00031">
    <property type="entry name" value="HTHREPRESSR"/>
</dbReference>
<dbReference type="SMART" id="SM00389">
    <property type="entry name" value="HOX"/>
    <property type="match status" value="2"/>
</dbReference>
<dbReference type="SUPFAM" id="SSF46689">
    <property type="entry name" value="Homeodomain-like"/>
    <property type="match status" value="2"/>
</dbReference>
<dbReference type="PROSITE" id="PS50071">
    <property type="entry name" value="HOMEOBOX_2"/>
    <property type="match status" value="2"/>
</dbReference>
<evidence type="ECO:0000255" key="1">
    <source>
        <dbReference type="PROSITE-ProRule" id="PRU00108"/>
    </source>
</evidence>
<evidence type="ECO:0000256" key="2">
    <source>
        <dbReference type="SAM" id="MobiDB-lite"/>
    </source>
</evidence>
<evidence type="ECO:0000269" key="3">
    <source>
    </source>
</evidence>
<evidence type="ECO:0000269" key="4">
    <source>
    </source>
</evidence>
<evidence type="ECO:0000269" key="5">
    <source>
    </source>
</evidence>
<evidence type="ECO:0000269" key="6">
    <source>
    </source>
</evidence>
<evidence type="ECO:0000269" key="7">
    <source>
    </source>
</evidence>
<evidence type="ECO:0000269" key="8">
    <source>
    </source>
</evidence>
<evidence type="ECO:0000269" key="9">
    <source>
    </source>
</evidence>
<evidence type="ECO:0000305" key="10"/>
<accession>Q6RFH8</accession>
<reference key="1">
    <citation type="journal article" date="2009" name="PLoS ONE">
        <title>DUX4c is up-regulated in FSHD. It induces the MYF5 protein and human myoblast proliferation.</title>
        <authorList>
            <person name="Ansseau E."/>
            <person name="Laoudj-Chenivesse D."/>
            <person name="Marcowycz A."/>
            <person name="Tassin A."/>
            <person name="Vanderplanck C."/>
            <person name="Sauvage S."/>
            <person name="Barro M."/>
            <person name="Mahieu I."/>
            <person name="Leroy A."/>
            <person name="Leclercq I."/>
            <person name="Mainfroid V."/>
            <person name="Figlewicz D."/>
            <person name="Mouly V."/>
            <person name="Butler-Browne G."/>
            <person name="Belayew A."/>
            <person name="Coppee F."/>
        </authorList>
    </citation>
    <scope>NUCLEOTIDE SEQUENCE [GENOMIC DNA]</scope>
    <scope>FUNCTION</scope>
    <scope>INTERACTION WITH MYF5</scope>
    <scope>SUBCELLULAR LOCATION</scope>
    <scope>TISSUE SPECIFICITY</scope>
    <scope>DEVELOPMENTAL STAGE</scope>
</reference>
<reference key="2">
    <citation type="journal article" date="2005" name="Nature">
        <title>Generation and annotation of the DNA sequences of human chromosomes 2 and 4.</title>
        <authorList>
            <person name="Hillier L.W."/>
            <person name="Graves T.A."/>
            <person name="Fulton R.S."/>
            <person name="Fulton L.A."/>
            <person name="Pepin K.H."/>
            <person name="Minx P."/>
            <person name="Wagner-McPherson C."/>
            <person name="Layman D."/>
            <person name="Wylie K."/>
            <person name="Sekhon M."/>
            <person name="Becker M.C."/>
            <person name="Fewell G.A."/>
            <person name="Delehaunty K.D."/>
            <person name="Miner T.L."/>
            <person name="Nash W.E."/>
            <person name="Kremitzki C."/>
            <person name="Oddy L."/>
            <person name="Du H."/>
            <person name="Sun H."/>
            <person name="Bradshaw-Cordum H."/>
            <person name="Ali J."/>
            <person name="Carter J."/>
            <person name="Cordes M."/>
            <person name="Harris A."/>
            <person name="Isak A."/>
            <person name="van Brunt A."/>
            <person name="Nguyen C."/>
            <person name="Du F."/>
            <person name="Courtney L."/>
            <person name="Kalicki J."/>
            <person name="Ozersky P."/>
            <person name="Abbott S."/>
            <person name="Armstrong J."/>
            <person name="Belter E.A."/>
            <person name="Caruso L."/>
            <person name="Cedroni M."/>
            <person name="Cotton M."/>
            <person name="Davidson T."/>
            <person name="Desai A."/>
            <person name="Elliott G."/>
            <person name="Erb T."/>
            <person name="Fronick C."/>
            <person name="Gaige T."/>
            <person name="Haakenson W."/>
            <person name="Haglund K."/>
            <person name="Holmes A."/>
            <person name="Harkins R."/>
            <person name="Kim K."/>
            <person name="Kruchowski S.S."/>
            <person name="Strong C.M."/>
            <person name="Grewal N."/>
            <person name="Goyea E."/>
            <person name="Hou S."/>
            <person name="Levy A."/>
            <person name="Martinka S."/>
            <person name="Mead K."/>
            <person name="McLellan M.D."/>
            <person name="Meyer R."/>
            <person name="Randall-Maher J."/>
            <person name="Tomlinson C."/>
            <person name="Dauphin-Kohlberg S."/>
            <person name="Kozlowicz-Reilly A."/>
            <person name="Shah N."/>
            <person name="Swearengen-Shahid S."/>
            <person name="Snider J."/>
            <person name="Strong J.T."/>
            <person name="Thompson J."/>
            <person name="Yoakum M."/>
            <person name="Leonard S."/>
            <person name="Pearman C."/>
            <person name="Trani L."/>
            <person name="Radionenko M."/>
            <person name="Waligorski J.E."/>
            <person name="Wang C."/>
            <person name="Rock S.M."/>
            <person name="Tin-Wollam A.-M."/>
            <person name="Maupin R."/>
            <person name="Latreille P."/>
            <person name="Wendl M.C."/>
            <person name="Yang S.-P."/>
            <person name="Pohl C."/>
            <person name="Wallis J.W."/>
            <person name="Spieth J."/>
            <person name="Bieri T.A."/>
            <person name="Berkowicz N."/>
            <person name="Nelson J.O."/>
            <person name="Osborne J."/>
            <person name="Ding L."/>
            <person name="Meyer R."/>
            <person name="Sabo A."/>
            <person name="Shotland Y."/>
            <person name="Sinha P."/>
            <person name="Wohldmann P.E."/>
            <person name="Cook L.L."/>
            <person name="Hickenbotham M.T."/>
            <person name="Eldred J."/>
            <person name="Williams D."/>
            <person name="Jones T.A."/>
            <person name="She X."/>
            <person name="Ciccarelli F.D."/>
            <person name="Izaurralde E."/>
            <person name="Taylor J."/>
            <person name="Schmutz J."/>
            <person name="Myers R.M."/>
            <person name="Cox D.R."/>
            <person name="Huang X."/>
            <person name="McPherson J.D."/>
            <person name="Mardis E.R."/>
            <person name="Clifton S.W."/>
            <person name="Warren W.C."/>
            <person name="Chinwalla A.T."/>
            <person name="Eddy S.R."/>
            <person name="Marra M.A."/>
            <person name="Ovcharenko I."/>
            <person name="Furey T.S."/>
            <person name="Miller W."/>
            <person name="Eichler E.E."/>
            <person name="Bork P."/>
            <person name="Suyama M."/>
            <person name="Torrents D."/>
            <person name="Waterston R.H."/>
            <person name="Wilson R.K."/>
        </authorList>
    </citation>
    <scope>NUCLEOTIDE SEQUENCE [LARGE SCALE GENOMIC DNA]</scope>
</reference>
<reference key="3">
    <citation type="journal article" date="2008" name="Exp. Neurol.">
        <title>DUX4c, an FSHD candidate gene, interferes with myogenic regulators and abolishes myoblast differentiation.</title>
        <authorList>
            <person name="Bosnakovski D."/>
            <person name="Lamb S."/>
            <person name="Simsek T."/>
            <person name="Xu Z."/>
            <person name="Belayew A."/>
            <person name="Perlingeiro R."/>
            <person name="Kyba M."/>
        </authorList>
    </citation>
    <scope>FUNCTION</scope>
</reference>
<reference key="4">
    <citation type="journal article" date="2013" name="J. Biol. Chem.">
        <title>Defective regulation of microRNA target genes in myoblasts from facioscapulohumeral dystrophy patients.</title>
        <authorList>
            <person name="Dmitriev P."/>
            <person name="Stankevicins L."/>
            <person name="Ansseau E."/>
            <person name="Petrov A."/>
            <person name="Barat A."/>
            <person name="Dessen P."/>
            <person name="Robert T."/>
            <person name="Turki A."/>
            <person name="Lazar V."/>
            <person name="Labourer E."/>
            <person name="Belayew A."/>
            <person name="Carnac G."/>
            <person name="Laoudj-Chenivesse D."/>
            <person name="Lipinski M."/>
            <person name="Vassetzky Y.S."/>
        </authorList>
    </citation>
    <scope>FUNCTION</scope>
</reference>
<reference key="5">
    <citation type="journal article" date="2016" name="PLoS ONE">
        <title>Homologous Transcription Factors DUX4 and DUX4c Associate with Cytoplasmic Proteins during Muscle Differentiation.</title>
        <authorList>
            <person name="Ansseau E."/>
            <person name="Eidahl J.O."/>
            <person name="Lancelot C."/>
            <person name="Tassin A."/>
            <person name="Matteotti C."/>
            <person name="Yip C."/>
            <person name="Liu J."/>
            <person name="Leroy B."/>
            <person name="Hubeau C."/>
            <person name="Gerbaux C."/>
            <person name="Cloet S."/>
            <person name="Wauters A."/>
            <person name="Zorbo S."/>
            <person name="Meyer P."/>
            <person name="Pirson I."/>
            <person name="Laoudj-Chenivesse D."/>
            <person name="Wattiez R."/>
            <person name="Harper S.Q."/>
            <person name="Belayew A."/>
            <person name="Coppee F."/>
        </authorList>
    </citation>
    <scope>SUBCELLULAR LOCATION</scope>
</reference>
<reference key="6">
    <citation type="journal article" date="2018" name="Skelet. Muscle">
        <title>Overexpression of the double homeodomain protein DUX4c interferes with myofibrillogenesis and induces clustering of myonuclei.</title>
        <authorList>
            <person name="Vanderplanck C."/>
            <person name="Tassin A."/>
            <person name="Ansseau E."/>
            <person name="Charron S."/>
            <person name="Wauters A."/>
            <person name="Lancelot C."/>
            <person name="Vancutsem K."/>
            <person name="Laoudj-Chenivesse D."/>
            <person name="Belayew A."/>
            <person name="Coppee F."/>
        </authorList>
    </citation>
    <scope>DISEASE</scope>
</reference>
<reference key="7">
    <citation type="journal article" date="2022" name="Front. Cell Dev. Biol.">
        <title>Antagonism Between DUX4 and DUX4c Highlights a Pathomechanism Operating Through beta-Catenin in Facioscapulohumeral Muscular Dystrophy.</title>
        <authorList>
            <person name="Ganassi M."/>
            <person name="Figeac N."/>
            <person name="Reynaud M."/>
            <person name="Ortuste Quiroga H.P."/>
            <person name="Zammit P.S."/>
        </authorList>
    </citation>
    <scope>FUNCTION</scope>
</reference>
<reference key="8">
    <citation type="journal article" date="2023" name="Skelet. Muscle">
        <title>The double homeodomain protein DUX4c is associated with regenerating muscle fibers and RNA-binding proteins.</title>
        <authorList>
            <person name="Claus C."/>
            <person name="Slavin M."/>
            <person name="Ansseau E."/>
            <person name="Lancelot C."/>
            <person name="Bah K."/>
            <person name="Lassche S."/>
            <person name="Fievet M."/>
            <person name="Greco A."/>
            <person name="Tomaiuolo S."/>
            <person name="Tassin A."/>
            <person name="Dudome V."/>
            <person name="Kusters B."/>
            <person name="Decleves A.E."/>
            <person name="Laoudj-Chenivesse D."/>
            <person name="van Engelen B.G.M."/>
            <person name="Nonclercq D."/>
            <person name="Belayew A."/>
            <person name="Kalisman N."/>
            <person name="Coppee F."/>
        </authorList>
    </citation>
    <scope>FUNCTION</scope>
    <scope>SUBCELLULAR LOCATION</scope>
    <scope>TISSUE SPECIFICITY</scope>
</reference>
<comment type="function">
    <text evidence="3 4 5 8 9">Down-regulates MYOD1 expression and may up-regulate MYF5 expression (PubMed:19829708). May regulate microRNA (miRNA) transcription, up-regulating the expression of some myogenic miRNAs, including MIR1-1, MIR133A2, MIR133B and MIR206 (PubMed:24145033). Impairs the differentiation of myoblasts and may be involved in muscle regeneration (PubMed:18723017, PubMed:36882853). Reduces DUX4-induced nuclear localization of CTNNB1/beta-catenin and its subsequent activation of target genes (PubMed:36158201).</text>
</comment>
<comment type="subunit">
    <text evidence="4">May interact with MYF5; regulates MYF5 expression.</text>
</comment>
<comment type="interaction">
    <interactant intactId="EBI-11599882">
        <id>Q6RFH8</id>
    </interactant>
    <interactant intactId="EBI-347528">
        <id>Q07021</id>
        <label>C1QBP</label>
    </interactant>
    <organismsDiffer>false</organismsDiffer>
    <experiments>3</experiments>
</comment>
<comment type="interaction">
    <interactant intactId="EBI-11599882">
        <id>Q6RFH8</id>
    </interactant>
    <interactant intactId="EBI-747310">
        <id>O94829</id>
        <label>IPO13</label>
    </interactant>
    <organismsDiffer>false</organismsDiffer>
    <experiments>2</experiments>
</comment>
<comment type="subcellular location">
    <subcellularLocation>
        <location evidence="1 4 6 9">Nucleus</location>
    </subcellularLocation>
    <subcellularLocation>
        <location evidence="6 9">Cytoplasm</location>
    </subcellularLocation>
    <text evidence="6">Localizes to the nucleus in proliferating muscle cells but is predominantly cytoplasmic in muscle cells following differentiation.</text>
</comment>
<comment type="tissue specificity">
    <text evidence="4 9">Expressed in muscles, as well as in primary myoblasts and myotubes (at protein level).</text>
</comment>
<comment type="developmental stage">
    <text evidence="4">Up-regulated during myoblast differentiation (at protein level).</text>
</comment>
<comment type="disease">
    <text evidence="4 7">Up-regulated in myoblasts of facioscapulohumeral muscular dystrophy (FSHD) patients (at protein level) (PubMed:19829708). Overexpression in primary myoblasts results in disorganized myotubes, troponin T delocalization, and abnormal beta-catenin accumulation following differentiation, suggesting that DUX4L9 up-regulation may contribute to DUX4 toxicity in FSHD (PubMed:29329560).</text>
</comment>
<comment type="caution">
    <text evidence="9 10">Defined as a pseudogene by resources such as HGNC and Ensembl. However, there is some evidence to suggest protein expression in muscle tissue (PubMed:36882853).</text>
</comment>
<name>DUX4C_HUMAN</name>
<keyword id="KW-0963">Cytoplasm</keyword>
<keyword id="KW-0238">DNA-binding</keyword>
<keyword id="KW-0371">Homeobox</keyword>
<keyword id="KW-0539">Nucleus</keyword>
<keyword id="KW-1185">Reference proteome</keyword>
<keyword id="KW-0677">Repeat</keyword>
<keyword id="KW-0804">Transcription</keyword>
<keyword id="KW-0805">Transcription regulation</keyword>
<feature type="chain" id="PRO_0000405256" description="Double homeobox protein 4C">
    <location>
        <begin position="1"/>
        <end position="374"/>
    </location>
</feature>
<feature type="DNA-binding region" description="Homeobox 1" evidence="1">
    <location>
        <begin position="19"/>
        <end position="78"/>
    </location>
</feature>
<feature type="DNA-binding region" description="Homeobox 2" evidence="1">
    <location>
        <begin position="94"/>
        <end position="153"/>
    </location>
</feature>
<feature type="region of interest" description="Disordered" evidence="2">
    <location>
        <begin position="1"/>
        <end position="24"/>
    </location>
</feature>
<feature type="region of interest" description="Disordered" evidence="2">
    <location>
        <begin position="72"/>
        <end position="102"/>
    </location>
</feature>
<feature type="region of interest" description="Disordered" evidence="2">
    <location>
        <begin position="218"/>
        <end position="374"/>
    </location>
</feature>
<feature type="compositionally biased region" description="Polar residues" evidence="2">
    <location>
        <begin position="1"/>
        <end position="10"/>
    </location>
</feature>
<feature type="compositionally biased region" description="Basic and acidic residues" evidence="2">
    <location>
        <begin position="265"/>
        <end position="274"/>
    </location>
</feature>
<feature type="compositionally biased region" description="Low complexity" evidence="2">
    <location>
        <begin position="278"/>
        <end position="302"/>
    </location>
</feature>
<feature type="compositionally biased region" description="Low complexity" evidence="2">
    <location>
        <begin position="319"/>
        <end position="329"/>
    </location>
</feature>
<feature type="compositionally biased region" description="Polar residues" evidence="2">
    <location>
        <begin position="354"/>
        <end position="374"/>
    </location>
</feature>